<comment type="function">
    <text evidence="1">Together with its co-chaperonin GroES, plays an essential role in assisting protein folding. The GroEL-GroES system forms a nano-cage that allows encapsulation of the non-native substrate proteins and provides a physical environment optimized to promote and accelerate protein folding.</text>
</comment>
<comment type="catalytic activity">
    <reaction evidence="1">
        <text>ATP + H2O + a folded polypeptide = ADP + phosphate + an unfolded polypeptide.</text>
        <dbReference type="EC" id="5.6.1.7"/>
    </reaction>
</comment>
<comment type="subunit">
    <text evidence="1">Forms a cylinder of 14 subunits composed of two heptameric rings stacked back-to-back. Interacts with the co-chaperonin GroES.</text>
</comment>
<comment type="subcellular location">
    <subcellularLocation>
        <location evidence="1">Cytoplasm</location>
    </subcellularLocation>
</comment>
<comment type="similarity">
    <text evidence="1">Belongs to the chaperonin (HSP60) family.</text>
</comment>
<accession>A6U6I5</accession>
<protein>
    <recommendedName>
        <fullName evidence="1">Chaperonin GroEL 1</fullName>
        <ecNumber evidence="1">5.6.1.7</ecNumber>
    </recommendedName>
    <alternativeName>
        <fullName evidence="1">60 kDa chaperonin 1</fullName>
    </alternativeName>
    <alternativeName>
        <fullName evidence="1">Chaperonin-60 1</fullName>
        <shortName evidence="1">Cpn60 1</shortName>
    </alternativeName>
</protein>
<evidence type="ECO:0000255" key="1">
    <source>
        <dbReference type="HAMAP-Rule" id="MF_00600"/>
    </source>
</evidence>
<dbReference type="EC" id="5.6.1.7" evidence="1"/>
<dbReference type="EMBL" id="CP000738">
    <property type="protein sequence ID" value="ABR59265.1"/>
    <property type="molecule type" value="Genomic_DNA"/>
</dbReference>
<dbReference type="RefSeq" id="YP_001326100.1">
    <property type="nucleotide sequence ID" value="NC_009636.1"/>
</dbReference>
<dbReference type="SMR" id="A6U6I5"/>
<dbReference type="STRING" id="366394.Smed_0408"/>
<dbReference type="KEGG" id="smd:Smed_0408"/>
<dbReference type="PATRIC" id="fig|366394.8.peg.3487"/>
<dbReference type="eggNOG" id="COG0459">
    <property type="taxonomic scope" value="Bacteria"/>
</dbReference>
<dbReference type="HOGENOM" id="CLU_016503_3_0_5"/>
<dbReference type="OrthoDB" id="9766614at2"/>
<dbReference type="Proteomes" id="UP000001108">
    <property type="component" value="Chromosome"/>
</dbReference>
<dbReference type="GO" id="GO:0005737">
    <property type="term" value="C:cytoplasm"/>
    <property type="evidence" value="ECO:0007669"/>
    <property type="project" value="UniProtKB-SubCell"/>
</dbReference>
<dbReference type="GO" id="GO:0005524">
    <property type="term" value="F:ATP binding"/>
    <property type="evidence" value="ECO:0007669"/>
    <property type="project" value="UniProtKB-UniRule"/>
</dbReference>
<dbReference type="GO" id="GO:0140662">
    <property type="term" value="F:ATP-dependent protein folding chaperone"/>
    <property type="evidence" value="ECO:0007669"/>
    <property type="project" value="InterPro"/>
</dbReference>
<dbReference type="GO" id="GO:0016853">
    <property type="term" value="F:isomerase activity"/>
    <property type="evidence" value="ECO:0007669"/>
    <property type="project" value="UniProtKB-KW"/>
</dbReference>
<dbReference type="GO" id="GO:0051082">
    <property type="term" value="F:unfolded protein binding"/>
    <property type="evidence" value="ECO:0007669"/>
    <property type="project" value="UniProtKB-UniRule"/>
</dbReference>
<dbReference type="GO" id="GO:0042026">
    <property type="term" value="P:protein refolding"/>
    <property type="evidence" value="ECO:0007669"/>
    <property type="project" value="UniProtKB-UniRule"/>
</dbReference>
<dbReference type="CDD" id="cd03344">
    <property type="entry name" value="GroEL"/>
    <property type="match status" value="1"/>
</dbReference>
<dbReference type="FunFam" id="1.10.560.10:FF:000001">
    <property type="entry name" value="60 kDa chaperonin"/>
    <property type="match status" value="1"/>
</dbReference>
<dbReference type="FunFam" id="3.50.7.10:FF:000001">
    <property type="entry name" value="60 kDa chaperonin"/>
    <property type="match status" value="1"/>
</dbReference>
<dbReference type="Gene3D" id="3.50.7.10">
    <property type="entry name" value="GroEL"/>
    <property type="match status" value="1"/>
</dbReference>
<dbReference type="Gene3D" id="1.10.560.10">
    <property type="entry name" value="GroEL-like equatorial domain"/>
    <property type="match status" value="1"/>
</dbReference>
<dbReference type="Gene3D" id="3.30.260.10">
    <property type="entry name" value="TCP-1-like chaperonin intermediate domain"/>
    <property type="match status" value="1"/>
</dbReference>
<dbReference type="HAMAP" id="MF_00600">
    <property type="entry name" value="CH60"/>
    <property type="match status" value="1"/>
</dbReference>
<dbReference type="InterPro" id="IPR018370">
    <property type="entry name" value="Chaperonin_Cpn60_CS"/>
</dbReference>
<dbReference type="InterPro" id="IPR001844">
    <property type="entry name" value="Cpn60/GroEL"/>
</dbReference>
<dbReference type="InterPro" id="IPR002423">
    <property type="entry name" value="Cpn60/GroEL/TCP-1"/>
</dbReference>
<dbReference type="InterPro" id="IPR027409">
    <property type="entry name" value="GroEL-like_apical_dom_sf"/>
</dbReference>
<dbReference type="InterPro" id="IPR027413">
    <property type="entry name" value="GROEL-like_equatorial_sf"/>
</dbReference>
<dbReference type="InterPro" id="IPR027410">
    <property type="entry name" value="TCP-1-like_intermed_sf"/>
</dbReference>
<dbReference type="NCBIfam" id="TIGR02348">
    <property type="entry name" value="GroEL"/>
    <property type="match status" value="1"/>
</dbReference>
<dbReference type="NCBIfam" id="NF000592">
    <property type="entry name" value="PRK00013.1"/>
    <property type="match status" value="1"/>
</dbReference>
<dbReference type="NCBIfam" id="NF009487">
    <property type="entry name" value="PRK12849.1"/>
    <property type="match status" value="1"/>
</dbReference>
<dbReference type="NCBIfam" id="NF009488">
    <property type="entry name" value="PRK12850.1"/>
    <property type="match status" value="1"/>
</dbReference>
<dbReference type="NCBIfam" id="NF009489">
    <property type="entry name" value="PRK12851.1"/>
    <property type="match status" value="1"/>
</dbReference>
<dbReference type="PANTHER" id="PTHR45633">
    <property type="entry name" value="60 KDA HEAT SHOCK PROTEIN, MITOCHONDRIAL"/>
    <property type="match status" value="1"/>
</dbReference>
<dbReference type="Pfam" id="PF00118">
    <property type="entry name" value="Cpn60_TCP1"/>
    <property type="match status" value="1"/>
</dbReference>
<dbReference type="PRINTS" id="PR00298">
    <property type="entry name" value="CHAPERONIN60"/>
</dbReference>
<dbReference type="SUPFAM" id="SSF52029">
    <property type="entry name" value="GroEL apical domain-like"/>
    <property type="match status" value="1"/>
</dbReference>
<dbReference type="SUPFAM" id="SSF48592">
    <property type="entry name" value="GroEL equatorial domain-like"/>
    <property type="match status" value="1"/>
</dbReference>
<dbReference type="SUPFAM" id="SSF54849">
    <property type="entry name" value="GroEL-intermediate domain like"/>
    <property type="match status" value="1"/>
</dbReference>
<dbReference type="PROSITE" id="PS00296">
    <property type="entry name" value="CHAPERONINS_CPN60"/>
    <property type="match status" value="1"/>
</dbReference>
<sequence>MAAKEVKFGRSAREKMLRGVDILADAVKVTLGPKGRNVVIDKSFGAPRITKDGVSVAKEIELEDKFENMGAQMVREVASKTNDIAGDGTTTATVLAQAIVREGAKAVAAGMNPMDLKRGIDLAVAEVVKDLLAKAKKINTSDEVAQVGTISANGEKQIGLDIAEAMQKVGNEGVITVEEAKTAETELEVVEGMQFDRGYLSPYFVTNPEKMVADLEDAYILLHEKKLSNLQAMLPVLEAVVQTGKPLLIIAEDVEGEALATLVVNKLRGGLKIAAVKAPGFGDRRKAMLEDIAILTGGTVISEDLGIKLESVTLDMLGRAKKVSITKENTTIVDGAGQKSDIEGRVAQIKAQIEETTSDYDREKLQERLAKLAGGVAVIRVGGATEVEVKEKKDRIDDALNATRAAVQEGIVPGGGVALLRSSVKITVKGENDDQDAGVNIVRRALQSPARQIVENAGDEASIVVGKILEKDTDDFGYNAQTGEYGDMIAMGIIDPVKVVRTALQDAASVASLLITTEAMIAELPKKDAPAMPGGMGGMGGMDMM</sequence>
<feature type="chain" id="PRO_0000332083" description="Chaperonin GroEL 1">
    <location>
        <begin position="1"/>
        <end position="545"/>
    </location>
</feature>
<feature type="binding site" evidence="1">
    <location>
        <begin position="30"/>
        <end position="33"/>
    </location>
    <ligand>
        <name>ATP</name>
        <dbReference type="ChEBI" id="CHEBI:30616"/>
    </ligand>
</feature>
<feature type="binding site" evidence="1">
    <location>
        <position position="51"/>
    </location>
    <ligand>
        <name>ATP</name>
        <dbReference type="ChEBI" id="CHEBI:30616"/>
    </ligand>
</feature>
<feature type="binding site" evidence="1">
    <location>
        <begin position="87"/>
        <end position="91"/>
    </location>
    <ligand>
        <name>ATP</name>
        <dbReference type="ChEBI" id="CHEBI:30616"/>
    </ligand>
</feature>
<feature type="binding site" evidence="1">
    <location>
        <position position="415"/>
    </location>
    <ligand>
        <name>ATP</name>
        <dbReference type="ChEBI" id="CHEBI:30616"/>
    </ligand>
</feature>
<feature type="binding site" evidence="1">
    <location>
        <position position="495"/>
    </location>
    <ligand>
        <name>ATP</name>
        <dbReference type="ChEBI" id="CHEBI:30616"/>
    </ligand>
</feature>
<proteinExistence type="inferred from homology"/>
<gene>
    <name evidence="1" type="primary">groEL1</name>
    <name evidence="1" type="synonym">groL1</name>
    <name type="ordered locus">Smed_0408</name>
</gene>
<organism>
    <name type="scientific">Sinorhizobium medicae (strain WSM419)</name>
    <name type="common">Ensifer medicae</name>
    <dbReference type="NCBI Taxonomy" id="366394"/>
    <lineage>
        <taxon>Bacteria</taxon>
        <taxon>Pseudomonadati</taxon>
        <taxon>Pseudomonadota</taxon>
        <taxon>Alphaproteobacteria</taxon>
        <taxon>Hyphomicrobiales</taxon>
        <taxon>Rhizobiaceae</taxon>
        <taxon>Sinorhizobium/Ensifer group</taxon>
        <taxon>Sinorhizobium</taxon>
    </lineage>
</organism>
<keyword id="KW-0067">ATP-binding</keyword>
<keyword id="KW-0143">Chaperone</keyword>
<keyword id="KW-0963">Cytoplasm</keyword>
<keyword id="KW-0413">Isomerase</keyword>
<keyword id="KW-0547">Nucleotide-binding</keyword>
<name>CH601_SINMW</name>
<reference key="1">
    <citation type="submission" date="2007-06" db="EMBL/GenBank/DDBJ databases">
        <title>Complete sequence of Sinorhizobium medicae WSM419 chromosome.</title>
        <authorList>
            <consortium name="US DOE Joint Genome Institute"/>
            <person name="Copeland A."/>
            <person name="Lucas S."/>
            <person name="Lapidus A."/>
            <person name="Barry K."/>
            <person name="Glavina del Rio T."/>
            <person name="Dalin E."/>
            <person name="Tice H."/>
            <person name="Pitluck S."/>
            <person name="Chain P."/>
            <person name="Malfatti S."/>
            <person name="Shin M."/>
            <person name="Vergez L."/>
            <person name="Schmutz J."/>
            <person name="Larimer F."/>
            <person name="Land M."/>
            <person name="Hauser L."/>
            <person name="Kyrpides N."/>
            <person name="Mikhailova N."/>
            <person name="Reeve W.G."/>
            <person name="Richardson P."/>
        </authorList>
    </citation>
    <scope>NUCLEOTIDE SEQUENCE [LARGE SCALE GENOMIC DNA]</scope>
    <source>
        <strain>WSM419</strain>
    </source>
</reference>